<dbReference type="EMBL" id="CP000493">
    <property type="protein sequence ID" value="ABM80403.1"/>
    <property type="molecule type" value="Genomic_DNA"/>
</dbReference>
<dbReference type="RefSeq" id="WP_011821721.1">
    <property type="nucleotide sequence ID" value="NC_008818.1"/>
</dbReference>
<dbReference type="SMR" id="A2BK92"/>
<dbReference type="STRING" id="415426.Hbut_0543"/>
<dbReference type="EnsemblBacteria" id="ABM80403">
    <property type="protein sequence ID" value="ABM80403"/>
    <property type="gene ID" value="Hbut_0543"/>
</dbReference>
<dbReference type="GeneID" id="4782134"/>
<dbReference type="KEGG" id="hbu:Hbut_0543"/>
<dbReference type="eggNOG" id="arCOG01751">
    <property type="taxonomic scope" value="Archaea"/>
</dbReference>
<dbReference type="HOGENOM" id="CLU_084513_4_0_2"/>
<dbReference type="OrthoDB" id="25810at2157"/>
<dbReference type="Proteomes" id="UP000002593">
    <property type="component" value="Chromosome"/>
</dbReference>
<dbReference type="GO" id="GO:0005737">
    <property type="term" value="C:cytoplasm"/>
    <property type="evidence" value="ECO:0007669"/>
    <property type="project" value="UniProtKB-SubCell"/>
</dbReference>
<dbReference type="GO" id="GO:1990904">
    <property type="term" value="C:ribonucleoprotein complex"/>
    <property type="evidence" value="ECO:0007669"/>
    <property type="project" value="UniProtKB-KW"/>
</dbReference>
<dbReference type="GO" id="GO:0005840">
    <property type="term" value="C:ribosome"/>
    <property type="evidence" value="ECO:0007669"/>
    <property type="project" value="UniProtKB-KW"/>
</dbReference>
<dbReference type="GO" id="GO:0004526">
    <property type="term" value="F:ribonuclease P activity"/>
    <property type="evidence" value="ECO:0007669"/>
    <property type="project" value="UniProtKB-UniRule"/>
</dbReference>
<dbReference type="GO" id="GO:0019843">
    <property type="term" value="F:rRNA binding"/>
    <property type="evidence" value="ECO:0007669"/>
    <property type="project" value="UniProtKB-KW"/>
</dbReference>
<dbReference type="GO" id="GO:0003735">
    <property type="term" value="F:structural constituent of ribosome"/>
    <property type="evidence" value="ECO:0007669"/>
    <property type="project" value="InterPro"/>
</dbReference>
<dbReference type="GO" id="GO:0042254">
    <property type="term" value="P:ribosome biogenesis"/>
    <property type="evidence" value="ECO:0007669"/>
    <property type="project" value="InterPro"/>
</dbReference>
<dbReference type="GO" id="GO:0006412">
    <property type="term" value="P:translation"/>
    <property type="evidence" value="ECO:0007669"/>
    <property type="project" value="UniProtKB-UniRule"/>
</dbReference>
<dbReference type="GO" id="GO:0001682">
    <property type="term" value="P:tRNA 5'-leader removal"/>
    <property type="evidence" value="ECO:0007669"/>
    <property type="project" value="UniProtKB-UniRule"/>
</dbReference>
<dbReference type="FunFam" id="3.30.1330.30:FF:000020">
    <property type="entry name" value="50S ribosomal protein L7Ae"/>
    <property type="match status" value="1"/>
</dbReference>
<dbReference type="Gene3D" id="3.30.1330.30">
    <property type="match status" value="1"/>
</dbReference>
<dbReference type="HAMAP" id="MF_00326">
    <property type="entry name" value="Ribosomal_eL8"/>
    <property type="match status" value="1"/>
</dbReference>
<dbReference type="InterPro" id="IPR050257">
    <property type="entry name" value="eL8/uL1-like"/>
</dbReference>
<dbReference type="InterPro" id="IPR029064">
    <property type="entry name" value="Ribosomal_eL30-like_sf"/>
</dbReference>
<dbReference type="InterPro" id="IPR004037">
    <property type="entry name" value="Ribosomal_eL8-like_CS"/>
</dbReference>
<dbReference type="InterPro" id="IPR004038">
    <property type="entry name" value="Ribosomal_eL8/eL30/eS12/Gad45"/>
</dbReference>
<dbReference type="InterPro" id="IPR018492">
    <property type="entry name" value="Ribosomal_eL8/Nhp2"/>
</dbReference>
<dbReference type="InterPro" id="IPR022481">
    <property type="entry name" value="Ribosomal_eL8_arc"/>
</dbReference>
<dbReference type="NCBIfam" id="TIGR03677">
    <property type="entry name" value="eL8_ribo"/>
    <property type="match status" value="1"/>
</dbReference>
<dbReference type="PANTHER" id="PTHR23105">
    <property type="entry name" value="RIBOSOMAL PROTEIN L7AE FAMILY MEMBER"/>
    <property type="match status" value="1"/>
</dbReference>
<dbReference type="Pfam" id="PF01248">
    <property type="entry name" value="Ribosomal_L7Ae"/>
    <property type="match status" value="1"/>
</dbReference>
<dbReference type="PRINTS" id="PR00881">
    <property type="entry name" value="L7ARS6FAMILY"/>
</dbReference>
<dbReference type="PRINTS" id="PR00884">
    <property type="entry name" value="RIBOSOMALHS6"/>
</dbReference>
<dbReference type="SUPFAM" id="SSF55315">
    <property type="entry name" value="L30e-like"/>
    <property type="match status" value="1"/>
</dbReference>
<dbReference type="PROSITE" id="PS01082">
    <property type="entry name" value="RIBOSOMAL_L7AE"/>
    <property type="match status" value="1"/>
</dbReference>
<evidence type="ECO:0000255" key="1">
    <source>
        <dbReference type="HAMAP-Rule" id="MF_00326"/>
    </source>
</evidence>
<evidence type="ECO:0000305" key="2"/>
<reference key="1">
    <citation type="journal article" date="2007" name="Archaea">
        <title>The genome of Hyperthermus butylicus: a sulfur-reducing, peptide fermenting, neutrophilic Crenarchaeote growing up to 108 degrees C.</title>
        <authorList>
            <person name="Bruegger K."/>
            <person name="Chen L."/>
            <person name="Stark M."/>
            <person name="Zibat A."/>
            <person name="Redder P."/>
            <person name="Ruepp A."/>
            <person name="Awayez M."/>
            <person name="She Q."/>
            <person name="Garrett R.A."/>
            <person name="Klenk H.-P."/>
        </authorList>
    </citation>
    <scope>NUCLEOTIDE SEQUENCE [LARGE SCALE GENOMIC DNA]</scope>
    <source>
        <strain>DSM 5456 / JCM 9403 / PLM1-5</strain>
    </source>
</reference>
<name>RL7A_HYPBU</name>
<feature type="chain" id="PRO_1000005026" description="Large ribosomal subunit protein eL8">
    <location>
        <begin position="1"/>
        <end position="127"/>
    </location>
</feature>
<comment type="function">
    <text evidence="1">Multifunctional RNA-binding protein that recognizes the K-turn motif in ribosomal RNA, the RNA component of RNase P, box H/ACA, box C/D and box C'/D' sRNAs.</text>
</comment>
<comment type="subunit">
    <text evidence="1">Part of the 50S ribosomal subunit. Probably part of the RNase P complex.</text>
</comment>
<comment type="subcellular location">
    <subcellularLocation>
        <location evidence="1">Cytoplasm</location>
    </subcellularLocation>
</comment>
<comment type="similarity">
    <text evidence="1">Belongs to the eukaryotic ribosomal protein eL8 family.</text>
</comment>
<organism>
    <name type="scientific">Hyperthermus butylicus (strain DSM 5456 / JCM 9403 / PLM1-5)</name>
    <dbReference type="NCBI Taxonomy" id="415426"/>
    <lineage>
        <taxon>Archaea</taxon>
        <taxon>Thermoproteota</taxon>
        <taxon>Thermoprotei</taxon>
        <taxon>Desulfurococcales</taxon>
        <taxon>Pyrodictiaceae</taxon>
        <taxon>Hyperthermus</taxon>
    </lineage>
</organism>
<accession>A2BK92</accession>
<keyword id="KW-0963">Cytoplasm</keyword>
<keyword id="KW-1185">Reference proteome</keyword>
<keyword id="KW-0687">Ribonucleoprotein</keyword>
<keyword id="KW-0689">Ribosomal protein</keyword>
<keyword id="KW-0694">RNA-binding</keyword>
<keyword id="KW-0699">rRNA-binding</keyword>
<keyword id="KW-0819">tRNA processing</keyword>
<protein>
    <recommendedName>
        <fullName evidence="1">Large ribosomal subunit protein eL8</fullName>
    </recommendedName>
    <alternativeName>
        <fullName evidence="2">50S ribosomal protein L7Ae</fullName>
    </alternativeName>
    <alternativeName>
        <fullName evidence="1">Ribosomal protein L8e</fullName>
    </alternativeName>
</protein>
<proteinExistence type="inferred from homology"/>
<gene>
    <name evidence="1" type="primary">rpl7ae</name>
    <name type="ordered locus">Hbut_0543</name>
</gene>
<sequence>MSKPFYVRFEVPPELAEKAYQALEIARKTGKIKKGTNETTKCVERGLAKLVLIAEDVDPPEIVAHLPLLCEEKKIPYVYVPSKKRLGEAAGIEVAAASACIIDPGEAKNLVEEIVKAVNELKTKAAQ</sequence>